<name>PGK_STRT2</name>
<proteinExistence type="inferred from homology"/>
<evidence type="ECO:0000255" key="1">
    <source>
        <dbReference type="HAMAP-Rule" id="MF_00145"/>
    </source>
</evidence>
<comment type="catalytic activity">
    <reaction evidence="1">
        <text>(2R)-3-phosphoglycerate + ATP = (2R)-3-phospho-glyceroyl phosphate + ADP</text>
        <dbReference type="Rhea" id="RHEA:14801"/>
        <dbReference type="ChEBI" id="CHEBI:30616"/>
        <dbReference type="ChEBI" id="CHEBI:57604"/>
        <dbReference type="ChEBI" id="CHEBI:58272"/>
        <dbReference type="ChEBI" id="CHEBI:456216"/>
        <dbReference type="EC" id="2.7.2.3"/>
    </reaction>
</comment>
<comment type="pathway">
    <text evidence="1">Carbohydrate degradation; glycolysis; pyruvate from D-glyceraldehyde 3-phosphate: step 2/5.</text>
</comment>
<comment type="subunit">
    <text evidence="1">Monomer.</text>
</comment>
<comment type="subcellular location">
    <subcellularLocation>
        <location evidence="1">Cytoplasm</location>
    </subcellularLocation>
</comment>
<comment type="similarity">
    <text evidence="1">Belongs to the phosphoglycerate kinase family.</text>
</comment>
<protein>
    <recommendedName>
        <fullName evidence="1">Phosphoglycerate kinase</fullName>
        <ecNumber evidence="1">2.7.2.3</ecNumber>
    </recommendedName>
</protein>
<gene>
    <name evidence="1" type="primary">pgk</name>
    <name type="ordered locus">stu1782</name>
</gene>
<keyword id="KW-0067">ATP-binding</keyword>
<keyword id="KW-0963">Cytoplasm</keyword>
<keyword id="KW-0324">Glycolysis</keyword>
<keyword id="KW-0418">Kinase</keyword>
<keyword id="KW-0547">Nucleotide-binding</keyword>
<keyword id="KW-1185">Reference proteome</keyword>
<keyword id="KW-0808">Transferase</keyword>
<accession>Q8VVB6</accession>
<accession>Q5M2M8</accession>
<organism>
    <name type="scientific">Streptococcus thermophilus (strain ATCC BAA-250 / LMG 18311)</name>
    <dbReference type="NCBI Taxonomy" id="264199"/>
    <lineage>
        <taxon>Bacteria</taxon>
        <taxon>Bacillati</taxon>
        <taxon>Bacillota</taxon>
        <taxon>Bacilli</taxon>
        <taxon>Lactobacillales</taxon>
        <taxon>Streptococcaceae</taxon>
        <taxon>Streptococcus</taxon>
    </lineage>
</organism>
<reference key="1">
    <citation type="submission" date="2001-11" db="EMBL/GenBank/DDBJ databases">
        <title>Modulation of glycolysis by lactose availability in Streptococcus thermophilus.</title>
        <authorList>
            <person name="van den Bogaard P.T.C."/>
            <person name="Kleerebezem M."/>
            <person name="Hols P."/>
            <person name="Crispie F."/>
            <person name="Kuipers O.P."/>
            <person name="de Vos W.M."/>
        </authorList>
    </citation>
    <scope>NUCLEOTIDE SEQUENCE [GENOMIC DNA]</scope>
</reference>
<reference key="2">
    <citation type="journal article" date="2004" name="Nat. Biotechnol.">
        <title>Complete sequence and comparative genome analysis of the dairy bacterium Streptococcus thermophilus.</title>
        <authorList>
            <person name="Bolotin A."/>
            <person name="Quinquis B."/>
            <person name="Renault P."/>
            <person name="Sorokin A."/>
            <person name="Ehrlich S.D."/>
            <person name="Kulakauskas S."/>
            <person name="Lapidus A."/>
            <person name="Goltsman E."/>
            <person name="Mazur M."/>
            <person name="Pusch G.D."/>
            <person name="Fonstein M."/>
            <person name="Overbeek R."/>
            <person name="Kyprides N."/>
            <person name="Purnelle B."/>
            <person name="Prozzi D."/>
            <person name="Ngui K."/>
            <person name="Masuy D."/>
            <person name="Hancy F."/>
            <person name="Burteau S."/>
            <person name="Boutry M."/>
            <person name="Delcour J."/>
            <person name="Goffeau A."/>
            <person name="Hols P."/>
        </authorList>
    </citation>
    <scope>NUCLEOTIDE SEQUENCE [LARGE SCALE GENOMIC DNA]</scope>
    <source>
        <strain>ATCC BAA-250 / LMG 18311</strain>
    </source>
</reference>
<dbReference type="EC" id="2.7.2.3" evidence="1"/>
<dbReference type="EMBL" id="AF442554">
    <property type="protein sequence ID" value="AAL35380.1"/>
    <property type="molecule type" value="Genomic_DNA"/>
</dbReference>
<dbReference type="EMBL" id="CP000023">
    <property type="protein sequence ID" value="AAV61381.1"/>
    <property type="molecule type" value="Genomic_DNA"/>
</dbReference>
<dbReference type="RefSeq" id="WP_011226568.1">
    <property type="nucleotide sequence ID" value="NC_006448.1"/>
</dbReference>
<dbReference type="SMR" id="Q8VVB6"/>
<dbReference type="STRING" id="264199.stu1782"/>
<dbReference type="GeneID" id="66899515"/>
<dbReference type="KEGG" id="stl:stu1782"/>
<dbReference type="PATRIC" id="fig|264199.4.peg.1759"/>
<dbReference type="eggNOG" id="COG0126">
    <property type="taxonomic scope" value="Bacteria"/>
</dbReference>
<dbReference type="HOGENOM" id="CLU_025427_0_2_9"/>
<dbReference type="UniPathway" id="UPA00109">
    <property type="reaction ID" value="UER00185"/>
</dbReference>
<dbReference type="Proteomes" id="UP000001170">
    <property type="component" value="Chromosome"/>
</dbReference>
<dbReference type="GO" id="GO:0005829">
    <property type="term" value="C:cytosol"/>
    <property type="evidence" value="ECO:0007669"/>
    <property type="project" value="TreeGrafter"/>
</dbReference>
<dbReference type="GO" id="GO:0043531">
    <property type="term" value="F:ADP binding"/>
    <property type="evidence" value="ECO:0007669"/>
    <property type="project" value="TreeGrafter"/>
</dbReference>
<dbReference type="GO" id="GO:0005524">
    <property type="term" value="F:ATP binding"/>
    <property type="evidence" value="ECO:0007669"/>
    <property type="project" value="UniProtKB-KW"/>
</dbReference>
<dbReference type="GO" id="GO:0004618">
    <property type="term" value="F:phosphoglycerate kinase activity"/>
    <property type="evidence" value="ECO:0007669"/>
    <property type="project" value="UniProtKB-UniRule"/>
</dbReference>
<dbReference type="GO" id="GO:0006094">
    <property type="term" value="P:gluconeogenesis"/>
    <property type="evidence" value="ECO:0007669"/>
    <property type="project" value="TreeGrafter"/>
</dbReference>
<dbReference type="GO" id="GO:0006096">
    <property type="term" value="P:glycolytic process"/>
    <property type="evidence" value="ECO:0007669"/>
    <property type="project" value="UniProtKB-UniRule"/>
</dbReference>
<dbReference type="FunFam" id="3.40.50.1260:FF:000001">
    <property type="entry name" value="Phosphoglycerate kinase"/>
    <property type="match status" value="1"/>
</dbReference>
<dbReference type="FunFam" id="3.40.50.1260:FF:000008">
    <property type="entry name" value="Phosphoglycerate kinase"/>
    <property type="match status" value="1"/>
</dbReference>
<dbReference type="Gene3D" id="3.40.50.1260">
    <property type="entry name" value="Phosphoglycerate kinase, N-terminal domain"/>
    <property type="match status" value="2"/>
</dbReference>
<dbReference type="HAMAP" id="MF_00145">
    <property type="entry name" value="Phosphoglyc_kinase"/>
    <property type="match status" value="1"/>
</dbReference>
<dbReference type="InterPro" id="IPR001576">
    <property type="entry name" value="Phosphoglycerate_kinase"/>
</dbReference>
<dbReference type="InterPro" id="IPR015911">
    <property type="entry name" value="Phosphoglycerate_kinase_CS"/>
</dbReference>
<dbReference type="InterPro" id="IPR015824">
    <property type="entry name" value="Phosphoglycerate_kinase_N"/>
</dbReference>
<dbReference type="InterPro" id="IPR036043">
    <property type="entry name" value="Phosphoglycerate_kinase_sf"/>
</dbReference>
<dbReference type="PANTHER" id="PTHR11406">
    <property type="entry name" value="PHOSPHOGLYCERATE KINASE"/>
    <property type="match status" value="1"/>
</dbReference>
<dbReference type="PANTHER" id="PTHR11406:SF23">
    <property type="entry name" value="PHOSPHOGLYCERATE KINASE 1, CHLOROPLASTIC-RELATED"/>
    <property type="match status" value="1"/>
</dbReference>
<dbReference type="Pfam" id="PF00162">
    <property type="entry name" value="PGK"/>
    <property type="match status" value="1"/>
</dbReference>
<dbReference type="PIRSF" id="PIRSF000724">
    <property type="entry name" value="Pgk"/>
    <property type="match status" value="1"/>
</dbReference>
<dbReference type="PRINTS" id="PR00477">
    <property type="entry name" value="PHGLYCKINASE"/>
</dbReference>
<dbReference type="SUPFAM" id="SSF53748">
    <property type="entry name" value="Phosphoglycerate kinase"/>
    <property type="match status" value="1"/>
</dbReference>
<dbReference type="PROSITE" id="PS00111">
    <property type="entry name" value="PGLYCERATE_KINASE"/>
    <property type="match status" value="1"/>
</dbReference>
<feature type="chain" id="PRO_0000146021" description="Phosphoglycerate kinase">
    <location>
        <begin position="1"/>
        <end position="399"/>
    </location>
</feature>
<feature type="binding site" evidence="1">
    <location>
        <begin position="21"/>
        <end position="23"/>
    </location>
    <ligand>
        <name>substrate</name>
    </ligand>
</feature>
<feature type="binding site" evidence="1">
    <location>
        <position position="36"/>
    </location>
    <ligand>
        <name>substrate</name>
    </ligand>
</feature>
<feature type="binding site" evidence="1">
    <location>
        <begin position="59"/>
        <end position="62"/>
    </location>
    <ligand>
        <name>substrate</name>
    </ligand>
</feature>
<feature type="binding site" evidence="1">
    <location>
        <position position="120"/>
    </location>
    <ligand>
        <name>substrate</name>
    </ligand>
</feature>
<feature type="binding site" evidence="1">
    <location>
        <position position="158"/>
    </location>
    <ligand>
        <name>substrate</name>
    </ligand>
</feature>
<feature type="binding site" evidence="1">
    <location>
        <position position="209"/>
    </location>
    <ligand>
        <name>ATP</name>
        <dbReference type="ChEBI" id="CHEBI:30616"/>
    </ligand>
</feature>
<feature type="binding site" evidence="1">
    <location>
        <position position="297"/>
    </location>
    <ligand>
        <name>ATP</name>
        <dbReference type="ChEBI" id="CHEBI:30616"/>
    </ligand>
</feature>
<feature type="binding site" evidence="1">
    <location>
        <position position="328"/>
    </location>
    <ligand>
        <name>ATP</name>
        <dbReference type="ChEBI" id="CHEBI:30616"/>
    </ligand>
</feature>
<feature type="binding site" evidence="1">
    <location>
        <begin position="355"/>
        <end position="358"/>
    </location>
    <ligand>
        <name>ATP</name>
        <dbReference type="ChEBI" id="CHEBI:30616"/>
    </ligand>
</feature>
<sequence>MAKLTVKDVELKGKKVLVRVDFNVPVKDGVITNDNRITAALPTIKYILEQGGRAILFSHLGRVKEEADKEGKSLAPVAADLAAKLGQDVKFIPGVTRGAELEAAVNSLEDGQVLLVENTRFEDVDGKKESKNDPELGKYWASLGDGIFVNDAFGTAHRAHASNVGISANVEKAVAGFLLENEIAYIQEAVENPERPFVAILGGSKVSDKIGVIENLLEKADKVLIGGGMTYTFFKAQGIEIGNSLVEEDKLDVAKALLEKSNGKLILPVDSKEANAFADYTEVKYTEGEAVDPGFLGLDIGPKSIAKFDEALTGAKTVVWNGPMGVFENPDFQAGTIGVMDAIVKQPGVKSIIGGGDSAAAAINLGYADKFSWISTGGGASMELLEGKELPGLAALTEK</sequence>